<keyword id="KW-0021">Allosteric enzyme</keyword>
<keyword id="KW-0328">Glycosyltransferase</keyword>
<keyword id="KW-0342">GTP-binding</keyword>
<keyword id="KW-0460">Magnesium</keyword>
<keyword id="KW-0547">Nucleotide-binding</keyword>
<keyword id="KW-0808">Transferase</keyword>
<feature type="chain" id="PRO_1000213938" description="Uracil phosphoribosyltransferase">
    <location>
        <begin position="1"/>
        <end position="209"/>
    </location>
</feature>
<feature type="binding site" evidence="1">
    <location>
        <position position="79"/>
    </location>
    <ligand>
        <name>5-phospho-alpha-D-ribose 1-diphosphate</name>
        <dbReference type="ChEBI" id="CHEBI:58017"/>
    </ligand>
</feature>
<feature type="binding site" evidence="1">
    <location>
        <position position="104"/>
    </location>
    <ligand>
        <name>5-phospho-alpha-D-ribose 1-diphosphate</name>
        <dbReference type="ChEBI" id="CHEBI:58017"/>
    </ligand>
</feature>
<feature type="binding site" evidence="1">
    <location>
        <begin position="131"/>
        <end position="139"/>
    </location>
    <ligand>
        <name>5-phospho-alpha-D-ribose 1-diphosphate</name>
        <dbReference type="ChEBI" id="CHEBI:58017"/>
    </ligand>
</feature>
<feature type="binding site" evidence="1">
    <location>
        <position position="194"/>
    </location>
    <ligand>
        <name>uracil</name>
        <dbReference type="ChEBI" id="CHEBI:17568"/>
    </ligand>
</feature>
<feature type="binding site" evidence="1">
    <location>
        <begin position="199"/>
        <end position="201"/>
    </location>
    <ligand>
        <name>uracil</name>
        <dbReference type="ChEBI" id="CHEBI:17568"/>
    </ligand>
</feature>
<feature type="binding site" evidence="1">
    <location>
        <position position="200"/>
    </location>
    <ligand>
        <name>5-phospho-alpha-D-ribose 1-diphosphate</name>
        <dbReference type="ChEBI" id="CHEBI:58017"/>
    </ligand>
</feature>
<organism>
    <name type="scientific">Streptococcus equi subsp. zooepidemicus (strain H70)</name>
    <dbReference type="NCBI Taxonomy" id="553483"/>
    <lineage>
        <taxon>Bacteria</taxon>
        <taxon>Bacillati</taxon>
        <taxon>Bacillota</taxon>
        <taxon>Bacilli</taxon>
        <taxon>Lactobacillales</taxon>
        <taxon>Streptococcaceae</taxon>
        <taxon>Streptococcus</taxon>
    </lineage>
</organism>
<sequence>MGKCQVISHPLIQHKLSILRRQDTSTKDFRELVNEIAMLMGYEVSRDLPLEDVEIQTPVAKTVQKQLAGKKLAIVPILRAGIGMVDGFLSLVPAAKVGHIGMYRNEETLEPVEYLVKLPEDIDQRQIFIVDPMLATGGSAILAVDSLKKRGAANIKFVCLVAAPEGVKKLQEAHPDVDIYTAALDERLNDHGYIVPGLGDAGDRLFGTK</sequence>
<reference key="1">
    <citation type="journal article" date="2009" name="PLoS Pathog.">
        <title>Genomic evidence for the evolution of Streptococcus equi: host restriction, increased virulence, and genetic exchange with human pathogens.</title>
        <authorList>
            <person name="Holden M.T.G."/>
            <person name="Heather Z."/>
            <person name="Paillot R."/>
            <person name="Steward K.F."/>
            <person name="Webb K."/>
            <person name="Ainslie F."/>
            <person name="Jourdan T."/>
            <person name="Bason N.C."/>
            <person name="Holroyd N.E."/>
            <person name="Mungall K."/>
            <person name="Quail M.A."/>
            <person name="Sanders M."/>
            <person name="Simmonds M."/>
            <person name="Willey D."/>
            <person name="Brooks K."/>
            <person name="Aanensen D.M."/>
            <person name="Spratt B.G."/>
            <person name="Jolley K.A."/>
            <person name="Maiden M.C.J."/>
            <person name="Kehoe M."/>
            <person name="Chanter N."/>
            <person name="Bentley S.D."/>
            <person name="Robinson C."/>
            <person name="Maskell D.J."/>
            <person name="Parkhill J."/>
            <person name="Waller A.S."/>
        </authorList>
    </citation>
    <scope>NUCLEOTIDE SEQUENCE [LARGE SCALE GENOMIC DNA]</scope>
    <source>
        <strain>H70</strain>
    </source>
</reference>
<name>UPP_STRS7</name>
<accession>C0MGT4</accession>
<protein>
    <recommendedName>
        <fullName evidence="1">Uracil phosphoribosyltransferase</fullName>
        <ecNumber evidence="1">2.4.2.9</ecNumber>
    </recommendedName>
    <alternativeName>
        <fullName evidence="1">UMP pyrophosphorylase</fullName>
    </alternativeName>
    <alternativeName>
        <fullName evidence="1">UPRTase</fullName>
    </alternativeName>
</protein>
<comment type="function">
    <text evidence="1">Catalyzes the conversion of uracil and 5-phospho-alpha-D-ribose 1-diphosphate (PRPP) to UMP and diphosphate.</text>
</comment>
<comment type="catalytic activity">
    <reaction evidence="1">
        <text>UMP + diphosphate = 5-phospho-alpha-D-ribose 1-diphosphate + uracil</text>
        <dbReference type="Rhea" id="RHEA:13017"/>
        <dbReference type="ChEBI" id="CHEBI:17568"/>
        <dbReference type="ChEBI" id="CHEBI:33019"/>
        <dbReference type="ChEBI" id="CHEBI:57865"/>
        <dbReference type="ChEBI" id="CHEBI:58017"/>
        <dbReference type="EC" id="2.4.2.9"/>
    </reaction>
</comment>
<comment type="cofactor">
    <cofactor evidence="1">
        <name>Mg(2+)</name>
        <dbReference type="ChEBI" id="CHEBI:18420"/>
    </cofactor>
    <text evidence="1">Binds 1 Mg(2+) ion per subunit. The magnesium is bound as Mg-PRPP.</text>
</comment>
<comment type="activity regulation">
    <text evidence="1">Allosterically activated by GTP.</text>
</comment>
<comment type="pathway">
    <text evidence="1">Pyrimidine metabolism; UMP biosynthesis via salvage pathway; UMP from uracil: step 1/1.</text>
</comment>
<comment type="similarity">
    <text evidence="1">Belongs to the UPRTase family.</text>
</comment>
<dbReference type="EC" id="2.4.2.9" evidence="1"/>
<dbReference type="EMBL" id="FM204884">
    <property type="protein sequence ID" value="CAW98201.1"/>
    <property type="molecule type" value="Genomic_DNA"/>
</dbReference>
<dbReference type="SMR" id="C0MGT4"/>
<dbReference type="KEGG" id="seq:SZO_03570"/>
<dbReference type="eggNOG" id="COG0035">
    <property type="taxonomic scope" value="Bacteria"/>
</dbReference>
<dbReference type="HOGENOM" id="CLU_067096_2_2_9"/>
<dbReference type="UniPathway" id="UPA00574">
    <property type="reaction ID" value="UER00636"/>
</dbReference>
<dbReference type="Proteomes" id="UP000001368">
    <property type="component" value="Chromosome"/>
</dbReference>
<dbReference type="GO" id="GO:0005525">
    <property type="term" value="F:GTP binding"/>
    <property type="evidence" value="ECO:0007669"/>
    <property type="project" value="UniProtKB-KW"/>
</dbReference>
<dbReference type="GO" id="GO:0000287">
    <property type="term" value="F:magnesium ion binding"/>
    <property type="evidence" value="ECO:0007669"/>
    <property type="project" value="UniProtKB-UniRule"/>
</dbReference>
<dbReference type="GO" id="GO:0004845">
    <property type="term" value="F:uracil phosphoribosyltransferase activity"/>
    <property type="evidence" value="ECO:0007669"/>
    <property type="project" value="UniProtKB-UniRule"/>
</dbReference>
<dbReference type="GO" id="GO:0044206">
    <property type="term" value="P:UMP salvage"/>
    <property type="evidence" value="ECO:0007669"/>
    <property type="project" value="UniProtKB-UniRule"/>
</dbReference>
<dbReference type="GO" id="GO:0006223">
    <property type="term" value="P:uracil salvage"/>
    <property type="evidence" value="ECO:0007669"/>
    <property type="project" value="InterPro"/>
</dbReference>
<dbReference type="CDD" id="cd06223">
    <property type="entry name" value="PRTases_typeI"/>
    <property type="match status" value="1"/>
</dbReference>
<dbReference type="FunFam" id="3.40.50.2020:FF:000003">
    <property type="entry name" value="Uracil phosphoribosyltransferase"/>
    <property type="match status" value="1"/>
</dbReference>
<dbReference type="Gene3D" id="3.40.50.2020">
    <property type="match status" value="1"/>
</dbReference>
<dbReference type="HAMAP" id="MF_01218_B">
    <property type="entry name" value="Upp_B"/>
    <property type="match status" value="1"/>
</dbReference>
<dbReference type="InterPro" id="IPR000836">
    <property type="entry name" value="PRibTrfase_dom"/>
</dbReference>
<dbReference type="InterPro" id="IPR029057">
    <property type="entry name" value="PRTase-like"/>
</dbReference>
<dbReference type="InterPro" id="IPR034332">
    <property type="entry name" value="Upp_B"/>
</dbReference>
<dbReference type="InterPro" id="IPR050054">
    <property type="entry name" value="UPRTase/APRTase"/>
</dbReference>
<dbReference type="InterPro" id="IPR005765">
    <property type="entry name" value="Ura_phspho_trans"/>
</dbReference>
<dbReference type="NCBIfam" id="NF001097">
    <property type="entry name" value="PRK00129.1"/>
    <property type="match status" value="1"/>
</dbReference>
<dbReference type="NCBIfam" id="TIGR01091">
    <property type="entry name" value="upp"/>
    <property type="match status" value="1"/>
</dbReference>
<dbReference type="PANTHER" id="PTHR32315">
    <property type="entry name" value="ADENINE PHOSPHORIBOSYLTRANSFERASE"/>
    <property type="match status" value="1"/>
</dbReference>
<dbReference type="PANTHER" id="PTHR32315:SF4">
    <property type="entry name" value="URACIL PHOSPHORIBOSYLTRANSFERASE, CHLOROPLASTIC"/>
    <property type="match status" value="1"/>
</dbReference>
<dbReference type="Pfam" id="PF14681">
    <property type="entry name" value="UPRTase"/>
    <property type="match status" value="1"/>
</dbReference>
<dbReference type="SUPFAM" id="SSF53271">
    <property type="entry name" value="PRTase-like"/>
    <property type="match status" value="1"/>
</dbReference>
<evidence type="ECO:0000255" key="1">
    <source>
        <dbReference type="HAMAP-Rule" id="MF_01218"/>
    </source>
</evidence>
<gene>
    <name evidence="1" type="primary">upp</name>
    <name type="ordered locus">SZO_03570</name>
</gene>
<proteinExistence type="inferred from homology"/>